<sequence>MDVNPTLLFLKVPAQNAISTTFPYTGDPPYSHGTGTGYTMDTVNRTHQYSEKGKWTTNTETGAPQLNPIDGPLPEDNEPSGYAQTDCVLEAMAFLEKSHPGIFENSCLETMEIVQQTRVDKLTQGRQTYDWTLNRNQPAATALANTIEVFRSNGLTANESGRLIDFLKDVMESMDKGEMEITTHFQRKRRVRDNMTKKMVTQRTIGKKKQRLNKRSYLIRALTLNTMTKDAERGKLKRRAIATPGMQIRGFVYFVETLARSICEKLEQSGLPVGGNEKKAKLANVVRKMMTNSQDTELSFTITGDNTKWNENQNPRMFLAMITYITRKQPEWFRNVLSIAPIMFSNKMARLGKGYMFESKSMKLRTQIPAEMLASIDLKYFNESTRKKIEKIRPLLIDGTASLSPGMMMGMFNMLSTVLGVSILNLGQKRYTKTTYWWDGLQSSDDFALIVNAPNHEGIQAGVDRFYRTCKLVGINMSKKKSYINRTGTFEFTS</sequence>
<name>RDRP_I01A2</name>
<dbReference type="EC" id="2.7.7.48"/>
<dbReference type="EMBL" id="AF509172">
    <property type="protein sequence ID" value="AAO53015.1"/>
    <property type="molecule type" value="Genomic_DNA"/>
</dbReference>
<dbReference type="SMR" id="Q809M5"/>
<dbReference type="GO" id="GO:0030430">
    <property type="term" value="C:host cell cytoplasm"/>
    <property type="evidence" value="ECO:0007669"/>
    <property type="project" value="UniProtKB-SubCell"/>
</dbReference>
<dbReference type="GO" id="GO:0042025">
    <property type="term" value="C:host cell nucleus"/>
    <property type="evidence" value="ECO:0007669"/>
    <property type="project" value="UniProtKB-SubCell"/>
</dbReference>
<dbReference type="GO" id="GO:0000166">
    <property type="term" value="F:nucleotide binding"/>
    <property type="evidence" value="ECO:0007669"/>
    <property type="project" value="UniProtKB-KW"/>
</dbReference>
<dbReference type="GO" id="GO:0003723">
    <property type="term" value="F:RNA binding"/>
    <property type="evidence" value="ECO:0007669"/>
    <property type="project" value="InterPro"/>
</dbReference>
<dbReference type="GO" id="GO:0003968">
    <property type="term" value="F:RNA-directed RNA polymerase activity"/>
    <property type="evidence" value="ECO:0007669"/>
    <property type="project" value="UniProtKB-KW"/>
</dbReference>
<dbReference type="GO" id="GO:0039657">
    <property type="term" value="P:symbiont-mediated suppression of host gene expression"/>
    <property type="evidence" value="ECO:0007669"/>
    <property type="project" value="UniProtKB-KW"/>
</dbReference>
<dbReference type="GO" id="GO:0039523">
    <property type="term" value="P:symbiont-mediated suppression of host mRNA transcription via inhibition of RNA polymerase II activity"/>
    <property type="evidence" value="ECO:0007669"/>
    <property type="project" value="UniProtKB-KW"/>
</dbReference>
<dbReference type="GO" id="GO:0039694">
    <property type="term" value="P:viral RNA genome replication"/>
    <property type="evidence" value="ECO:0007669"/>
    <property type="project" value="InterPro"/>
</dbReference>
<dbReference type="GO" id="GO:0019083">
    <property type="term" value="P:viral transcription"/>
    <property type="evidence" value="ECO:0007669"/>
    <property type="project" value="UniProtKB-KW"/>
</dbReference>
<dbReference type="InterPro" id="IPR007099">
    <property type="entry name" value="RNA-dir_pol_NSvirus"/>
</dbReference>
<dbReference type="InterPro" id="IPR001407">
    <property type="entry name" value="RNA_pol_PB1_influenza"/>
</dbReference>
<dbReference type="Pfam" id="PF00602">
    <property type="entry name" value="Flu_PB1"/>
    <property type="match status" value="1"/>
</dbReference>
<dbReference type="PROSITE" id="PS50525">
    <property type="entry name" value="RDRP_SSRNA_NEG_SEG"/>
    <property type="match status" value="1"/>
</dbReference>
<protein>
    <recommendedName>
        <fullName>RNA-directed RNA polymerase catalytic subunit</fullName>
        <ecNumber>2.7.7.48</ecNumber>
    </recommendedName>
    <alternativeName>
        <fullName>Polymerase basic protein 1</fullName>
        <shortName>PB1</shortName>
    </alternativeName>
    <alternativeName>
        <fullName>RNA-directed RNA polymerase subunit P1</fullName>
    </alternativeName>
</protein>
<comment type="function">
    <text evidence="2">RNA-dependent RNA polymerase which is responsible for replication and transcription of virus RNA segments. The transcription of viral mRNAs occurs by a unique mechanism called cap-snatching. 5' methylated caps of cellular mRNAs are cleaved after 10-13 nucleotides by PA. In turn, these short capped RNAs are used as primers by PB1 for transcription of viral mRNAs. During virus replication, PB1 initiates RNA synthesis and copy vRNA into complementary RNA (cRNA) which in turn serves as a template for the production of more vRNAs.</text>
</comment>
<comment type="catalytic activity">
    <reaction evidence="3">
        <text>RNA(n) + a ribonucleoside 5'-triphosphate = RNA(n+1) + diphosphate</text>
        <dbReference type="Rhea" id="RHEA:21248"/>
        <dbReference type="Rhea" id="RHEA-COMP:14527"/>
        <dbReference type="Rhea" id="RHEA-COMP:17342"/>
        <dbReference type="ChEBI" id="CHEBI:33019"/>
        <dbReference type="ChEBI" id="CHEBI:61557"/>
        <dbReference type="ChEBI" id="CHEBI:140395"/>
        <dbReference type="EC" id="2.7.7.48"/>
    </reaction>
</comment>
<comment type="subunit">
    <text evidence="2">Influenza RNA polymerase is composed of three subunits: PB1, PB2 and PA. Interacts (via N-terminus) with PA (via C-terminus). Interacts (via C-terminus) with PB2 (via N-terminus); this interaction is essential for transcription initiation.</text>
</comment>
<comment type="subcellular location">
    <subcellularLocation>
        <location evidence="2">Host nucleus</location>
    </subcellularLocation>
    <subcellularLocation>
        <location evidence="2">Host cytoplasm</location>
    </subcellularLocation>
</comment>
<comment type="PTM">
    <text evidence="2">Phosphorylated by host PRKCA.</text>
</comment>
<comment type="similarity">
    <text evidence="5">Belongs to the influenza viruses polymerase PB1 family.</text>
</comment>
<proteinExistence type="inferred from homology"/>
<organismHost>
    <name type="scientific">Aves</name>
    <dbReference type="NCBI Taxonomy" id="8782"/>
</organismHost>
<organismHost>
    <name type="scientific">Felis catus</name>
    <name type="common">Cat</name>
    <name type="synonym">Felis silvestris catus</name>
    <dbReference type="NCBI Taxonomy" id="9685"/>
</organismHost>
<organismHost>
    <name type="scientific">Homo sapiens</name>
    <name type="common">Human</name>
    <dbReference type="NCBI Taxonomy" id="9606"/>
</organismHost>
<organismHost>
    <name type="scientific">Panthera pardus</name>
    <name type="common">Leopard</name>
    <name type="synonym">Felis pardus</name>
    <dbReference type="NCBI Taxonomy" id="9691"/>
</organismHost>
<organismHost>
    <name type="scientific">Panthera tigris</name>
    <name type="common">Tiger</name>
    <dbReference type="NCBI Taxonomy" id="9694"/>
</organismHost>
<organismHost>
    <name type="scientific">Sus scrofa</name>
    <name type="common">Pig</name>
    <dbReference type="NCBI Taxonomy" id="9823"/>
</organismHost>
<evidence type="ECO:0000250" key="1"/>
<evidence type="ECO:0000250" key="2">
    <source>
        <dbReference type="UniProtKB" id="P03431"/>
    </source>
</evidence>
<evidence type="ECO:0000255" key="3">
    <source>
        <dbReference type="PROSITE-ProRule" id="PRU00539"/>
    </source>
</evidence>
<evidence type="ECO:0000256" key="4">
    <source>
        <dbReference type="SAM" id="MobiDB-lite"/>
    </source>
</evidence>
<evidence type="ECO:0000305" key="5"/>
<feature type="chain" id="PRO_0000311161" description="RNA-directed RNA polymerase catalytic subunit">
    <location>
        <begin position="1"/>
        <end position="494" status="greater than"/>
    </location>
</feature>
<feature type="domain" description="RdRp catalytic" evidence="3">
    <location>
        <begin position="286"/>
        <end position="483"/>
    </location>
</feature>
<feature type="region of interest" description="Disordered" evidence="4">
    <location>
        <begin position="50"/>
        <end position="82"/>
    </location>
</feature>
<feature type="region of interest" description="Promoter-binding site" evidence="1">
    <location>
        <begin position="249"/>
        <end position="256"/>
    </location>
</feature>
<feature type="short sequence motif" description="Nuclear localization signal" evidence="1">
    <location>
        <begin position="187"/>
        <end position="195"/>
    </location>
</feature>
<feature type="short sequence motif" description="Nuclear localization signal" evidence="1">
    <location>
        <begin position="203"/>
        <end position="216"/>
    </location>
</feature>
<feature type="compositionally biased region" description="Polar residues" evidence="4">
    <location>
        <begin position="55"/>
        <end position="64"/>
    </location>
</feature>
<feature type="non-terminal residue">
    <location>
        <position position="494"/>
    </location>
</feature>
<keyword id="KW-1262">Eukaryotic host gene expression shutoff by virus</keyword>
<keyword id="KW-1191">Eukaryotic host transcription shutoff by virus</keyword>
<keyword id="KW-1035">Host cytoplasm</keyword>
<keyword id="KW-1190">Host gene expression shutoff by virus</keyword>
<keyword id="KW-1048">Host nucleus</keyword>
<keyword id="KW-0945">Host-virus interaction</keyword>
<keyword id="KW-1104">Inhibition of host RNA polymerase II by virus</keyword>
<keyword id="KW-0547">Nucleotide-binding</keyword>
<keyword id="KW-0548">Nucleotidyltransferase</keyword>
<keyword id="KW-0597">Phosphoprotein</keyword>
<keyword id="KW-0696">RNA-directed RNA polymerase</keyword>
<keyword id="KW-0808">Transferase</keyword>
<keyword id="KW-0693">Viral RNA replication</keyword>
<keyword id="KW-1195">Viral transcription</keyword>
<reference key="1">
    <citation type="journal article" date="2002" name="Proc. Natl. Acad. Sci. U.S.A.">
        <title>Emergence of multiple genotypes of H5N1 avian influenza viruses in Hong Kong SAR.</title>
        <authorList>
            <person name="Guan Y."/>
            <person name="Peiris J.S.M."/>
            <person name="Lipatov A.S."/>
            <person name="Ellis T.M."/>
            <person name="Dyrting K.C."/>
            <person name="Krauss S."/>
            <person name="Zhang L.J."/>
            <person name="Webster R.G."/>
            <person name="Shortridge K.F."/>
        </authorList>
    </citation>
    <scope>NUCLEOTIDE SEQUENCE [GENOMIC RNA]</scope>
</reference>
<accession>Q809M5</accession>
<organism>
    <name type="scientific">Influenza A virus (strain A/Chicken/Hong Kong/FY150/2001 H5N1 genotype D)</name>
    <dbReference type="NCBI Taxonomy" id="222142"/>
    <lineage>
        <taxon>Viruses</taxon>
        <taxon>Riboviria</taxon>
        <taxon>Orthornavirae</taxon>
        <taxon>Negarnaviricota</taxon>
        <taxon>Polyploviricotina</taxon>
        <taxon>Insthoviricetes</taxon>
        <taxon>Articulavirales</taxon>
        <taxon>Orthomyxoviridae</taxon>
        <taxon>Alphainfluenzavirus</taxon>
        <taxon>Alphainfluenzavirus influenzae</taxon>
        <taxon>Influenza A virus</taxon>
    </lineage>
</organism>
<gene>
    <name type="primary">PB1</name>
</gene>